<sequence>MSNGTPSVRVLYFASARTTIGHSSETISLPTTPFPLASLITLIANKYSSRGAEAVLRTCRWSVDNTLIEIDELIEWTLHGREEVAAIPPVSGG</sequence>
<protein>
    <recommendedName>
        <fullName evidence="1">Molybdopterin synthase sulfur carrier subunit</fullName>
    </recommendedName>
    <alternativeName>
        <fullName evidence="1">Molybdenum cofactor synthesis protein 2 small subunit</fullName>
    </alternativeName>
    <alternativeName>
        <fullName evidence="1">Molybdenum cofactor synthesis protein 2A</fullName>
        <shortName evidence="1">MOCS2A</shortName>
    </alternativeName>
    <alternativeName>
        <fullName evidence="1">Sulfur carrier protein MOCS2A</fullName>
    </alternativeName>
</protein>
<organism>
    <name type="scientific">Mycosarcoma maydis</name>
    <name type="common">Corn smut fungus</name>
    <name type="synonym">Ustilago maydis</name>
    <dbReference type="NCBI Taxonomy" id="5270"/>
    <lineage>
        <taxon>Eukaryota</taxon>
        <taxon>Fungi</taxon>
        <taxon>Dikarya</taxon>
        <taxon>Basidiomycota</taxon>
        <taxon>Ustilaginomycotina</taxon>
        <taxon>Ustilaginomycetes</taxon>
        <taxon>Ustilaginales</taxon>
        <taxon>Ustilaginaceae</taxon>
        <taxon>Mycosarcoma</taxon>
    </lineage>
</organism>
<gene>
    <name type="ORF">UMAG_12084</name>
</gene>
<comment type="function">
    <text evidence="1">Acts as a sulfur carrier required for molybdopterin biosynthesis. Component of the molybdopterin synthase complex that catalyzes the conversion of precursor Z into molybdopterin by mediating the incorporation of 2 sulfur atoms into precursor Z to generate a dithiolene group. In the complex, serves as sulfur donor by being thiocarboxylated (-COSH) at its C-terminus by UBA4. After interaction with MOCS2B, the sulfur is then transferred to precursor Z to form molybdopterin.</text>
</comment>
<comment type="pathway">
    <text evidence="1">Cofactor biosynthesis; molybdopterin biosynthesis.</text>
</comment>
<comment type="subunit">
    <text evidence="1">Heterotetramer; composed of 2 small (MOCS2A) and 2 large (MOCS2B) subunits.</text>
</comment>
<comment type="subcellular location">
    <subcellularLocation>
        <location evidence="1">Cytoplasm</location>
    </subcellularLocation>
</comment>
<comment type="PTM">
    <text evidence="1">C-terminal thiocarboxylation occurs in 2 steps, it is first acyl-adenylated (-COAMP) via the hesA/moeB/thiF part of UBA4, then thiocarboxylated (-COSH) via the rhodanese domain of UBA4.</text>
</comment>
<comment type="similarity">
    <text evidence="1">Belongs to the MoaD family. MOCS2A subfamily.</text>
</comment>
<dbReference type="EMBL" id="CM003158">
    <property type="protein sequence ID" value="KIS66362.1"/>
    <property type="molecule type" value="Genomic_DNA"/>
</dbReference>
<dbReference type="RefSeq" id="XP_011392163.1">
    <property type="nucleotide sequence ID" value="XM_011393861.1"/>
</dbReference>
<dbReference type="SMR" id="P0CT28"/>
<dbReference type="STRING" id="237631.P0CT28"/>
<dbReference type="EnsemblFungi" id="KIS66362">
    <property type="protein sequence ID" value="KIS66362"/>
    <property type="gene ID" value="UMAG_12084"/>
</dbReference>
<dbReference type="GeneID" id="23567851"/>
<dbReference type="KEGG" id="uma:UMAG_12084"/>
<dbReference type="VEuPathDB" id="FungiDB:UMAG_12084"/>
<dbReference type="InParanoid" id="P0CT28"/>
<dbReference type="OrthoDB" id="5595860at2759"/>
<dbReference type="UniPathway" id="UPA00344"/>
<dbReference type="Proteomes" id="UP000000561">
    <property type="component" value="Chromosome 19"/>
</dbReference>
<dbReference type="GO" id="GO:1990133">
    <property type="term" value="C:molybdopterin adenylyltransferase complex"/>
    <property type="evidence" value="ECO:0000318"/>
    <property type="project" value="GO_Central"/>
</dbReference>
<dbReference type="GO" id="GO:1990140">
    <property type="term" value="C:molybdopterin synthase complex"/>
    <property type="evidence" value="ECO:0000250"/>
    <property type="project" value="UniProtKB"/>
</dbReference>
<dbReference type="GO" id="GO:0030366">
    <property type="term" value="F:molybdopterin synthase activity"/>
    <property type="evidence" value="ECO:0007669"/>
    <property type="project" value="UniProtKB-UniRule"/>
</dbReference>
<dbReference type="GO" id="GO:0000166">
    <property type="term" value="F:nucleotide binding"/>
    <property type="evidence" value="ECO:0007669"/>
    <property type="project" value="UniProtKB-KW"/>
</dbReference>
<dbReference type="GO" id="GO:0006777">
    <property type="term" value="P:Mo-molybdopterin cofactor biosynthetic process"/>
    <property type="evidence" value="ECO:0000250"/>
    <property type="project" value="UniProtKB"/>
</dbReference>
<dbReference type="CDD" id="cd00754">
    <property type="entry name" value="Ubl_MoaD"/>
    <property type="match status" value="1"/>
</dbReference>
<dbReference type="Gene3D" id="3.10.20.30">
    <property type="match status" value="1"/>
</dbReference>
<dbReference type="HAMAP" id="MF_03051">
    <property type="entry name" value="MOCS2A"/>
    <property type="match status" value="1"/>
</dbReference>
<dbReference type="InterPro" id="IPR012675">
    <property type="entry name" value="Beta-grasp_dom_sf"/>
</dbReference>
<dbReference type="InterPro" id="IPR044672">
    <property type="entry name" value="MOCS2A"/>
</dbReference>
<dbReference type="InterPro" id="IPR028887">
    <property type="entry name" value="MOCS2A_euk"/>
</dbReference>
<dbReference type="InterPro" id="IPR016155">
    <property type="entry name" value="Mopterin_synth/thiamin_S_b"/>
</dbReference>
<dbReference type="PANTHER" id="PTHR33359">
    <property type="entry name" value="MOLYBDOPTERIN SYNTHASE SULFUR CARRIER SUBUNIT"/>
    <property type="match status" value="1"/>
</dbReference>
<dbReference type="PANTHER" id="PTHR33359:SF1">
    <property type="entry name" value="MOLYBDOPTERIN SYNTHASE SULFUR CARRIER SUBUNIT"/>
    <property type="match status" value="1"/>
</dbReference>
<dbReference type="SUPFAM" id="SSF54285">
    <property type="entry name" value="MoaD/ThiS"/>
    <property type="match status" value="1"/>
</dbReference>
<proteinExistence type="inferred from homology"/>
<accession>P0CT28</accession>
<accession>A0A0D1BWI2</accession>
<accession>Q4P3F4</accession>
<feature type="chain" id="PRO_0000423950" description="Molybdopterin synthase sulfur carrier subunit">
    <location>
        <begin position="1"/>
        <end position="93"/>
    </location>
</feature>
<feature type="modified residue" description="1-thioglycine; alternate" evidence="1">
    <location>
        <position position="93"/>
    </location>
</feature>
<feature type="modified residue" description="Glycyl adenylate; alternate" evidence="1">
    <location>
        <position position="93"/>
    </location>
</feature>
<name>MOC2A_MYCMD</name>
<keyword id="KW-0963">Cytoplasm</keyword>
<keyword id="KW-0501">Molybdenum cofactor biosynthesis</keyword>
<keyword id="KW-0547">Nucleotide-binding</keyword>
<keyword id="KW-0597">Phosphoprotein</keyword>
<keyword id="KW-1185">Reference proteome</keyword>
<reference key="1">
    <citation type="journal article" date="2006" name="Nature">
        <title>Insights from the genome of the biotrophic fungal plant pathogen Ustilago maydis.</title>
        <authorList>
            <person name="Kaemper J."/>
            <person name="Kahmann R."/>
            <person name="Boelker M."/>
            <person name="Ma L.-J."/>
            <person name="Brefort T."/>
            <person name="Saville B.J."/>
            <person name="Banuett F."/>
            <person name="Kronstad J.W."/>
            <person name="Gold S.E."/>
            <person name="Mueller O."/>
            <person name="Perlin M.H."/>
            <person name="Woesten H.A.B."/>
            <person name="de Vries R."/>
            <person name="Ruiz-Herrera J."/>
            <person name="Reynaga-Pena C.G."/>
            <person name="Snetselaar K."/>
            <person name="McCann M."/>
            <person name="Perez-Martin J."/>
            <person name="Feldbruegge M."/>
            <person name="Basse C.W."/>
            <person name="Steinberg G."/>
            <person name="Ibeas J.I."/>
            <person name="Holloman W."/>
            <person name="Guzman P."/>
            <person name="Farman M.L."/>
            <person name="Stajich J.E."/>
            <person name="Sentandreu R."/>
            <person name="Gonzalez-Prieto J.M."/>
            <person name="Kennell J.C."/>
            <person name="Molina L."/>
            <person name="Schirawski J."/>
            <person name="Mendoza-Mendoza A."/>
            <person name="Greilinger D."/>
            <person name="Muench K."/>
            <person name="Roessel N."/>
            <person name="Scherer M."/>
            <person name="Vranes M."/>
            <person name="Ladendorf O."/>
            <person name="Vincon V."/>
            <person name="Fuchs U."/>
            <person name="Sandrock B."/>
            <person name="Meng S."/>
            <person name="Ho E.C.H."/>
            <person name="Cahill M.J."/>
            <person name="Boyce K.J."/>
            <person name="Klose J."/>
            <person name="Klosterman S.J."/>
            <person name="Deelstra H.J."/>
            <person name="Ortiz-Castellanos L."/>
            <person name="Li W."/>
            <person name="Sanchez-Alonso P."/>
            <person name="Schreier P.H."/>
            <person name="Haeuser-Hahn I."/>
            <person name="Vaupel M."/>
            <person name="Koopmann E."/>
            <person name="Friedrich G."/>
            <person name="Voss H."/>
            <person name="Schlueter T."/>
            <person name="Margolis J."/>
            <person name="Platt D."/>
            <person name="Swimmer C."/>
            <person name="Gnirke A."/>
            <person name="Chen F."/>
            <person name="Vysotskaia V."/>
            <person name="Mannhaupt G."/>
            <person name="Gueldener U."/>
            <person name="Muensterkoetter M."/>
            <person name="Haase D."/>
            <person name="Oesterheld M."/>
            <person name="Mewes H.-W."/>
            <person name="Mauceli E.W."/>
            <person name="DeCaprio D."/>
            <person name="Wade C.M."/>
            <person name="Butler J."/>
            <person name="Young S.K."/>
            <person name="Jaffe D.B."/>
            <person name="Calvo S.E."/>
            <person name="Nusbaum C."/>
            <person name="Galagan J.E."/>
            <person name="Birren B.W."/>
        </authorList>
    </citation>
    <scope>NUCLEOTIDE SEQUENCE [LARGE SCALE GENOMIC DNA]</scope>
    <source>
        <strain>DSM 14603 / FGSC 9021 / UM521</strain>
    </source>
</reference>
<reference key="2">
    <citation type="submission" date="2014-09" db="EMBL/GenBank/DDBJ databases">
        <authorList>
            <person name="Gueldener U."/>
            <person name="Muensterkoetter M."/>
            <person name="Walter M.C."/>
            <person name="Mannhaupt G."/>
            <person name="Kahmann R."/>
        </authorList>
    </citation>
    <scope>GENOME REANNOTATION</scope>
    <source>
        <strain>DSM 14603 / FGSC 9021 / UM521</strain>
    </source>
</reference>
<evidence type="ECO:0000255" key="1">
    <source>
        <dbReference type="HAMAP-Rule" id="MF_03051"/>
    </source>
</evidence>